<keyword id="KW-0732">Signal</keyword>
<dbReference type="EMBL" id="BA000038">
    <property type="protein sequence ID" value="BAC97472.1"/>
    <property type="status" value="ALT_INIT"/>
    <property type="molecule type" value="Genomic_DNA"/>
</dbReference>
<dbReference type="RefSeq" id="WP_043877589.1">
    <property type="nucleotide sequence ID" value="NC_005140.1"/>
</dbReference>
<dbReference type="STRING" id="672.VV93_v1c43520"/>
<dbReference type="KEGG" id="vvy:VVA1446"/>
<dbReference type="PATRIC" id="fig|196600.6.peg.4589"/>
<dbReference type="eggNOG" id="COG3110">
    <property type="taxonomic scope" value="Bacteria"/>
</dbReference>
<dbReference type="HOGENOM" id="CLU_073782_1_0_6"/>
<dbReference type="Proteomes" id="UP000002675">
    <property type="component" value="Chromosome II"/>
</dbReference>
<dbReference type="HAMAP" id="MF_00789">
    <property type="entry name" value="UPF0319"/>
    <property type="match status" value="1"/>
</dbReference>
<dbReference type="InterPro" id="IPR018635">
    <property type="entry name" value="UPF0319"/>
</dbReference>
<dbReference type="NCBIfam" id="NF003383">
    <property type="entry name" value="PRK04517.1"/>
    <property type="match status" value="1"/>
</dbReference>
<dbReference type="PANTHER" id="PTHR38108">
    <property type="entry name" value="UPF0319 PROTEIN YCCT"/>
    <property type="match status" value="1"/>
</dbReference>
<dbReference type="PANTHER" id="PTHR38108:SF1">
    <property type="entry name" value="UPF0319 PROTEIN YCCT"/>
    <property type="match status" value="1"/>
</dbReference>
<dbReference type="Pfam" id="PF09829">
    <property type="entry name" value="DUF2057"/>
    <property type="match status" value="1"/>
</dbReference>
<sequence>MNIIKPLTCILAMSISGLATAAVTLHVPDDVTLFVANGQKAKLSGSLFASSKTIELPNGENQIVFQYEPYFSQGNDRIGVESNVIIAKFSANDTDLNFELPKYRDHRVAEQEIKQMQWQLVDEQGAAVTKSEDKLVKSGMQIGRDYAREAADYNQTGGIAAIGTAVSVATIKTEPVADVETKVKAGDNTAEEMLHFWYDKADEATKARFKAYINQ</sequence>
<organism>
    <name type="scientific">Vibrio vulnificus (strain YJ016)</name>
    <dbReference type="NCBI Taxonomy" id="196600"/>
    <lineage>
        <taxon>Bacteria</taxon>
        <taxon>Pseudomonadati</taxon>
        <taxon>Pseudomonadota</taxon>
        <taxon>Gammaproteobacteria</taxon>
        <taxon>Vibrionales</taxon>
        <taxon>Vibrionaceae</taxon>
        <taxon>Vibrio</taxon>
    </lineage>
</organism>
<accession>Q7MCE1</accession>
<protein>
    <recommendedName>
        <fullName evidence="1">UPF0319 protein VVA1446</fullName>
    </recommendedName>
</protein>
<comment type="similarity">
    <text evidence="1">Belongs to the UPF0319 family.</text>
</comment>
<comment type="sequence caution" evidence="2">
    <conflict type="erroneous initiation">
        <sequence resource="EMBL-CDS" id="BAC97472"/>
    </conflict>
</comment>
<gene>
    <name type="ordered locus">VVA1446</name>
</gene>
<evidence type="ECO:0000255" key="1">
    <source>
        <dbReference type="HAMAP-Rule" id="MF_00789"/>
    </source>
</evidence>
<evidence type="ECO:0000305" key="2"/>
<feature type="signal peptide" evidence="1">
    <location>
        <begin position="1"/>
        <end position="21"/>
    </location>
</feature>
<feature type="chain" id="PRO_0000036317" description="UPF0319 protein VVA1446">
    <location>
        <begin position="22"/>
        <end position="215"/>
    </location>
</feature>
<reference key="1">
    <citation type="journal article" date="2003" name="Genome Res.">
        <title>Comparative genome analysis of Vibrio vulnificus, a marine pathogen.</title>
        <authorList>
            <person name="Chen C.-Y."/>
            <person name="Wu K.-M."/>
            <person name="Chang Y.-C."/>
            <person name="Chang C.-H."/>
            <person name="Tsai H.-C."/>
            <person name="Liao T.-L."/>
            <person name="Liu Y.-M."/>
            <person name="Chen H.-J."/>
            <person name="Shen A.B.-T."/>
            <person name="Li J.-C."/>
            <person name="Su T.-L."/>
            <person name="Shao C.-P."/>
            <person name="Lee C.-T."/>
            <person name="Hor L.-I."/>
            <person name="Tsai S.-F."/>
        </authorList>
    </citation>
    <scope>NUCLEOTIDE SEQUENCE [LARGE SCALE GENOMIC DNA]</scope>
    <source>
        <strain>YJ016</strain>
    </source>
</reference>
<name>Y5446_VIBVY</name>
<proteinExistence type="inferred from homology"/>